<organism>
    <name type="scientific">Escherichia coli O6:H1 (strain CFT073 / ATCC 700928 / UPEC)</name>
    <dbReference type="NCBI Taxonomy" id="199310"/>
    <lineage>
        <taxon>Bacteria</taxon>
        <taxon>Pseudomonadati</taxon>
        <taxon>Pseudomonadota</taxon>
        <taxon>Gammaproteobacteria</taxon>
        <taxon>Enterobacterales</taxon>
        <taxon>Enterobacteriaceae</taxon>
        <taxon>Escherichia</taxon>
    </lineage>
</organism>
<gene>
    <name type="primary">yafD</name>
    <name type="ordered locus">c0246</name>
</gene>
<reference key="1">
    <citation type="journal article" date="2002" name="Proc. Natl. Acad. Sci. U.S.A.">
        <title>Extensive mosaic structure revealed by the complete genome sequence of uropathogenic Escherichia coli.</title>
        <authorList>
            <person name="Welch R.A."/>
            <person name="Burland V."/>
            <person name="Plunkett G. III"/>
            <person name="Redford P."/>
            <person name="Roesch P."/>
            <person name="Rasko D."/>
            <person name="Buckles E.L."/>
            <person name="Liou S.-R."/>
            <person name="Boutin A."/>
            <person name="Hackett J."/>
            <person name="Stroud D."/>
            <person name="Mayhew G.F."/>
            <person name="Rose D.J."/>
            <person name="Zhou S."/>
            <person name="Schwartz D.C."/>
            <person name="Perna N.T."/>
            <person name="Mobley H.L.T."/>
            <person name="Donnenberg M.S."/>
            <person name="Blattner F.R."/>
        </authorList>
    </citation>
    <scope>NUCLEOTIDE SEQUENCE [LARGE SCALE GENOMIC DNA]</scope>
    <source>
        <strain>CFT073 / ATCC 700928 / UPEC</strain>
    </source>
</reference>
<accession>P0A8U3</accession>
<accession>P30865</accession>
<accession>P75671</accession>
<dbReference type="EMBL" id="AE014075">
    <property type="protein sequence ID" value="AAN78736.1"/>
    <property type="status" value="ALT_INIT"/>
    <property type="molecule type" value="Genomic_DNA"/>
</dbReference>
<dbReference type="RefSeq" id="WP_001230983.1">
    <property type="nucleotide sequence ID" value="NZ_CP051263.1"/>
</dbReference>
<dbReference type="SMR" id="P0A8U3"/>
<dbReference type="STRING" id="199310.c0246"/>
<dbReference type="KEGG" id="ecc:c0246"/>
<dbReference type="eggNOG" id="COG3021">
    <property type="taxonomic scope" value="Bacteria"/>
</dbReference>
<dbReference type="HOGENOM" id="CLU_083563_0_0_6"/>
<dbReference type="Proteomes" id="UP000001410">
    <property type="component" value="Chromosome"/>
</dbReference>
<dbReference type="GO" id="GO:0005737">
    <property type="term" value="C:cytoplasm"/>
    <property type="evidence" value="ECO:0007669"/>
    <property type="project" value="UniProtKB-SubCell"/>
</dbReference>
<dbReference type="GO" id="GO:0003824">
    <property type="term" value="F:catalytic activity"/>
    <property type="evidence" value="ECO:0007669"/>
    <property type="project" value="InterPro"/>
</dbReference>
<dbReference type="Gene3D" id="3.60.10.10">
    <property type="entry name" value="Endonuclease/exonuclease/phosphatase"/>
    <property type="match status" value="1"/>
</dbReference>
<dbReference type="HAMAP" id="MF_01119">
    <property type="entry name" value="UPF0294"/>
    <property type="match status" value="1"/>
</dbReference>
<dbReference type="InterPro" id="IPR036691">
    <property type="entry name" value="Endo/exonu/phosph_ase_sf"/>
</dbReference>
<dbReference type="InterPro" id="IPR005135">
    <property type="entry name" value="Endo/exonuclease/phosphatase"/>
</dbReference>
<dbReference type="InterPro" id="IPR022958">
    <property type="entry name" value="UPF0294"/>
</dbReference>
<dbReference type="NCBIfam" id="NF003839">
    <property type="entry name" value="PRK05421.1-1"/>
    <property type="match status" value="1"/>
</dbReference>
<dbReference type="NCBIfam" id="NF003840">
    <property type="entry name" value="PRK05421.1-2"/>
    <property type="match status" value="1"/>
</dbReference>
<dbReference type="NCBIfam" id="NF003841">
    <property type="entry name" value="PRK05421.1-3"/>
    <property type="match status" value="1"/>
</dbReference>
<dbReference type="NCBIfam" id="NF003842">
    <property type="entry name" value="PRK05421.1-4"/>
    <property type="match status" value="1"/>
</dbReference>
<dbReference type="Pfam" id="PF03372">
    <property type="entry name" value="Exo_endo_phos"/>
    <property type="match status" value="1"/>
</dbReference>
<dbReference type="SUPFAM" id="SSF56219">
    <property type="entry name" value="DNase I-like"/>
    <property type="match status" value="1"/>
</dbReference>
<sequence length="266" mass="29992">MRKNTYAMRYVAGQPAERILPPGSFASIGQALPPGEPLSTEERIRILVWNIYKQQRAEWLSVLKNYGKDAHLVLLQEAQTTPELVQFATANYLAADQVPAFVLPQHPSGVMTLSAAHPVYCCPLREREPILRLAKSALVTVYPLPDTRLLMVVNIHAVNFSLGVDVYSKQLLPIGDQIAHHSGPVIMAGDFNAWSRRRMNALYRFAREMSLRQVRFTDDQRRRAFGRPLDFVFYRGLNVSEASVLVTRASDHNPLLVEFSPGKPDK</sequence>
<proteinExistence type="inferred from homology"/>
<name>YAFD_ECOL6</name>
<evidence type="ECO:0000305" key="1"/>
<comment type="subcellular location">
    <subcellularLocation>
        <location evidence="1">Cytoplasm</location>
    </subcellularLocation>
</comment>
<comment type="similarity">
    <text evidence="1">Belongs to the UPF0294 family.</text>
</comment>
<comment type="sequence caution" evidence="1">
    <conflict type="erroneous initiation">
        <sequence resource="EMBL-CDS" id="AAN78736"/>
    </conflict>
</comment>
<keyword id="KW-0963">Cytoplasm</keyword>
<keyword id="KW-1185">Reference proteome</keyword>
<protein>
    <recommendedName>
        <fullName>UPF0294 protein YafD</fullName>
    </recommendedName>
</protein>
<feature type="chain" id="PRO_0000074638" description="UPF0294 protein YafD">
    <location>
        <begin position="1"/>
        <end position="266"/>
    </location>
</feature>